<name>RS2_NANEQ</name>
<accession>Q74M65</accession>
<reference key="1">
    <citation type="journal article" date="2003" name="Proc. Natl. Acad. Sci. U.S.A.">
        <title>The genome of Nanoarchaeum equitans: insights into early archaeal evolution and derived parasitism.</title>
        <authorList>
            <person name="Waters E."/>
            <person name="Hohn M.J."/>
            <person name="Ahel I."/>
            <person name="Graham D.E."/>
            <person name="Adams M.D."/>
            <person name="Barnstead M."/>
            <person name="Beeson K.Y."/>
            <person name="Bibbs L."/>
            <person name="Bolanos R."/>
            <person name="Keller M."/>
            <person name="Kretz K."/>
            <person name="Lin X."/>
            <person name="Mathur E."/>
            <person name="Ni J."/>
            <person name="Podar M."/>
            <person name="Richardson T."/>
            <person name="Sutton G.G."/>
            <person name="Simon M."/>
            <person name="Soell D."/>
            <person name="Stetter K.O."/>
            <person name="Short J.M."/>
            <person name="Noorderwier M."/>
        </authorList>
    </citation>
    <scope>NUCLEOTIDE SEQUENCE [LARGE SCALE GENOMIC DNA]</scope>
    <source>
        <strain>Kin4-M</strain>
    </source>
</reference>
<evidence type="ECO:0000255" key="1">
    <source>
        <dbReference type="HAMAP-Rule" id="MF_00291"/>
    </source>
</evidence>
<evidence type="ECO:0000305" key="2"/>
<keyword id="KW-1185">Reference proteome</keyword>
<keyword id="KW-0687">Ribonucleoprotein</keyword>
<keyword id="KW-0689">Ribosomal protein</keyword>
<proteinExistence type="inferred from homology"/>
<gene>
    <name evidence="1" type="primary">rps2</name>
    <name type="ordered locus">NEQ508</name>
</gene>
<comment type="similarity">
    <text evidence="1">Belongs to the universal ribosomal protein uS2 family.</text>
</comment>
<organism>
    <name type="scientific">Nanoarchaeum equitans (strain Kin4-M)</name>
    <dbReference type="NCBI Taxonomy" id="228908"/>
    <lineage>
        <taxon>Archaea</taxon>
        <taxon>Nanobdellota</taxon>
        <taxon>Candidatus Nanoarchaeia</taxon>
        <taxon>Nanoarchaeales</taxon>
        <taxon>Nanoarchaeaceae</taxon>
        <taxon>Nanoarchaeum</taxon>
    </lineage>
</organism>
<sequence>MDTLVPINVYVKAGIHIGTRHLTKDMKPYVSKIREDGLAIFDIRKIDERLRLASKMLSYYEPNEILVVGRRETAITPIKKFSEITKVKAFPGRYPPGTLTNPQLKYYMEPEVILITDPIMDKNALHDAYESGITILALCDTNHTKNYIDFCIPANNRGSKSLALIYWILAREYLRNRGVIGKDEQLKVPVEEFETKITVEE</sequence>
<protein>
    <recommendedName>
        <fullName evidence="1">Small ribosomal subunit protein uS2</fullName>
    </recommendedName>
    <alternativeName>
        <fullName evidence="2">30S ribosomal protein S2</fullName>
    </alternativeName>
</protein>
<dbReference type="EMBL" id="AE017199">
    <property type="protein sequence ID" value="AAR39349.1"/>
    <property type="molecule type" value="Genomic_DNA"/>
</dbReference>
<dbReference type="SMR" id="Q74M65"/>
<dbReference type="STRING" id="228908.NEQ508"/>
<dbReference type="EnsemblBacteria" id="AAR39349">
    <property type="protein sequence ID" value="AAR39349"/>
    <property type="gene ID" value="NEQ508"/>
</dbReference>
<dbReference type="KEGG" id="neq:NEQ508"/>
<dbReference type="PATRIC" id="fig|228908.8.peg.526"/>
<dbReference type="HOGENOM" id="CLU_058171_3_0_2"/>
<dbReference type="Proteomes" id="UP000000578">
    <property type="component" value="Chromosome"/>
</dbReference>
<dbReference type="GO" id="GO:0015935">
    <property type="term" value="C:small ribosomal subunit"/>
    <property type="evidence" value="ECO:0007669"/>
    <property type="project" value="InterPro"/>
</dbReference>
<dbReference type="GO" id="GO:0003735">
    <property type="term" value="F:structural constituent of ribosome"/>
    <property type="evidence" value="ECO:0007669"/>
    <property type="project" value="InterPro"/>
</dbReference>
<dbReference type="GO" id="GO:0006412">
    <property type="term" value="P:translation"/>
    <property type="evidence" value="ECO:0007669"/>
    <property type="project" value="UniProtKB-UniRule"/>
</dbReference>
<dbReference type="CDD" id="cd01425">
    <property type="entry name" value="RPS2"/>
    <property type="match status" value="1"/>
</dbReference>
<dbReference type="FunFam" id="3.40.50.10490:FF:000030">
    <property type="entry name" value="30S ribosomal protein S2"/>
    <property type="match status" value="1"/>
</dbReference>
<dbReference type="Gene3D" id="3.40.50.10490">
    <property type="entry name" value="Glucose-6-phosphate isomerase like protein, domain 1"/>
    <property type="match status" value="1"/>
</dbReference>
<dbReference type="HAMAP" id="MF_00291_A">
    <property type="entry name" value="Ribosomal_uS2_A"/>
    <property type="match status" value="1"/>
</dbReference>
<dbReference type="InterPro" id="IPR001865">
    <property type="entry name" value="Ribosomal_uS2"/>
</dbReference>
<dbReference type="InterPro" id="IPR023454">
    <property type="entry name" value="Ribosomal_uS2_arc"/>
</dbReference>
<dbReference type="InterPro" id="IPR005707">
    <property type="entry name" value="Ribosomal_uS2_euk/arc"/>
</dbReference>
<dbReference type="InterPro" id="IPR023591">
    <property type="entry name" value="Ribosomal_uS2_flav_dom_sf"/>
</dbReference>
<dbReference type="NCBIfam" id="TIGR01012">
    <property type="entry name" value="uS2_euk_arch"/>
    <property type="match status" value="1"/>
</dbReference>
<dbReference type="PANTHER" id="PTHR11489">
    <property type="entry name" value="40S RIBOSOMAL PROTEIN SA"/>
    <property type="match status" value="1"/>
</dbReference>
<dbReference type="Pfam" id="PF00318">
    <property type="entry name" value="Ribosomal_S2"/>
    <property type="match status" value="2"/>
</dbReference>
<dbReference type="PRINTS" id="PR00395">
    <property type="entry name" value="RIBOSOMALS2"/>
</dbReference>
<dbReference type="SUPFAM" id="SSF52313">
    <property type="entry name" value="Ribosomal protein S2"/>
    <property type="match status" value="1"/>
</dbReference>
<feature type="chain" id="PRO_0000352074" description="Small ribosomal subunit protein uS2">
    <location>
        <begin position="1"/>
        <end position="201"/>
    </location>
</feature>